<feature type="chain" id="PRO_0000319468" description="1-(5-phosphoribosyl)-5-[(5-phosphoribosylamino)methylideneamino] imidazole-4-carboxamide isomerase">
    <location>
        <begin position="1"/>
        <end position="237"/>
    </location>
</feature>
<feature type="active site" description="Proton acceptor" evidence="1">
    <location>
        <position position="8"/>
    </location>
</feature>
<feature type="active site" description="Proton donor" evidence="1">
    <location>
        <position position="129"/>
    </location>
</feature>
<sequence>MEIIPAIDMQGGRCVRLYQGDFQRVTVYDDDPVAVAHRWVAQGAPRLHLVDLDGARSGHPVHTDIIRAIVQSVDAPVQLGGGLRSIAAVERALELGVQRVILGTAAVHDPELIRQLVQQFGDAIAIAVDARNDMAATAGWTETAAISAIDLVERMAALGVRRVIYTDIARDGTLSEPNIATTRALVRPGGPAIIASGGISTIDHLRRLAEVGVEGAIVGRALYTGDLSLSDALAAVQ</sequence>
<protein>
    <recommendedName>
        <fullName evidence="1">1-(5-phosphoribosyl)-5-[(5-phosphoribosylamino)methylideneamino] imidazole-4-carboxamide isomerase</fullName>
        <ecNumber evidence="1">5.3.1.16</ecNumber>
    </recommendedName>
    <alternativeName>
        <fullName evidence="1">Phosphoribosylformimino-5-aminoimidazole carboxamide ribotide isomerase</fullName>
    </alternativeName>
</protein>
<name>HIS4_ROSS1</name>
<reference key="1">
    <citation type="submission" date="2007-04" db="EMBL/GenBank/DDBJ databases">
        <title>Complete sequence of Roseiflexus sp. RS-1.</title>
        <authorList>
            <consortium name="US DOE Joint Genome Institute"/>
            <person name="Copeland A."/>
            <person name="Lucas S."/>
            <person name="Lapidus A."/>
            <person name="Barry K."/>
            <person name="Detter J.C."/>
            <person name="Glavina del Rio T."/>
            <person name="Hammon N."/>
            <person name="Israni S."/>
            <person name="Dalin E."/>
            <person name="Tice H."/>
            <person name="Pitluck S."/>
            <person name="Chertkov O."/>
            <person name="Brettin T."/>
            <person name="Bruce D."/>
            <person name="Han C."/>
            <person name="Schmutz J."/>
            <person name="Larimer F."/>
            <person name="Land M."/>
            <person name="Hauser L."/>
            <person name="Kyrpides N."/>
            <person name="Mikhailova N."/>
            <person name="Bryant D.A."/>
            <person name="Richardson P."/>
        </authorList>
    </citation>
    <scope>NUCLEOTIDE SEQUENCE [LARGE SCALE GENOMIC DNA]</scope>
    <source>
        <strain>RS-1</strain>
    </source>
</reference>
<dbReference type="EC" id="5.3.1.16" evidence="1"/>
<dbReference type="EMBL" id="CP000686">
    <property type="protein sequence ID" value="ABQ91553.1"/>
    <property type="molecule type" value="Genomic_DNA"/>
</dbReference>
<dbReference type="RefSeq" id="WP_011957897.1">
    <property type="nucleotide sequence ID" value="NC_009523.1"/>
</dbReference>
<dbReference type="SMR" id="A5UY50"/>
<dbReference type="STRING" id="357808.RoseRS_3192"/>
<dbReference type="KEGG" id="rrs:RoseRS_3192"/>
<dbReference type="eggNOG" id="COG0106">
    <property type="taxonomic scope" value="Bacteria"/>
</dbReference>
<dbReference type="HOGENOM" id="CLU_048577_1_1_0"/>
<dbReference type="OrthoDB" id="9781903at2"/>
<dbReference type="UniPathway" id="UPA00031">
    <property type="reaction ID" value="UER00009"/>
</dbReference>
<dbReference type="Proteomes" id="UP000006554">
    <property type="component" value="Chromosome"/>
</dbReference>
<dbReference type="GO" id="GO:0005737">
    <property type="term" value="C:cytoplasm"/>
    <property type="evidence" value="ECO:0007669"/>
    <property type="project" value="UniProtKB-SubCell"/>
</dbReference>
<dbReference type="GO" id="GO:0003949">
    <property type="term" value="F:1-(5-phosphoribosyl)-5-[(5-phosphoribosylamino)methylideneamino]imidazole-4-carboxamide isomerase activity"/>
    <property type="evidence" value="ECO:0007669"/>
    <property type="project" value="UniProtKB-UniRule"/>
</dbReference>
<dbReference type="GO" id="GO:0000105">
    <property type="term" value="P:L-histidine biosynthetic process"/>
    <property type="evidence" value="ECO:0007669"/>
    <property type="project" value="UniProtKB-UniRule"/>
</dbReference>
<dbReference type="GO" id="GO:0000162">
    <property type="term" value="P:L-tryptophan biosynthetic process"/>
    <property type="evidence" value="ECO:0007669"/>
    <property type="project" value="TreeGrafter"/>
</dbReference>
<dbReference type="CDD" id="cd04732">
    <property type="entry name" value="HisA"/>
    <property type="match status" value="1"/>
</dbReference>
<dbReference type="FunFam" id="3.20.20.70:FF:000009">
    <property type="entry name" value="1-(5-phosphoribosyl)-5-[(5-phosphoribosylamino)methylideneamino] imidazole-4-carboxamide isomerase"/>
    <property type="match status" value="1"/>
</dbReference>
<dbReference type="Gene3D" id="3.20.20.70">
    <property type="entry name" value="Aldolase class I"/>
    <property type="match status" value="1"/>
</dbReference>
<dbReference type="HAMAP" id="MF_01014">
    <property type="entry name" value="HisA"/>
    <property type="match status" value="1"/>
</dbReference>
<dbReference type="InterPro" id="IPR013785">
    <property type="entry name" value="Aldolase_TIM"/>
</dbReference>
<dbReference type="InterPro" id="IPR006062">
    <property type="entry name" value="His_biosynth"/>
</dbReference>
<dbReference type="InterPro" id="IPR006063">
    <property type="entry name" value="HisA_bact_arch"/>
</dbReference>
<dbReference type="InterPro" id="IPR044524">
    <property type="entry name" value="Isoase_HisA-like"/>
</dbReference>
<dbReference type="InterPro" id="IPR023016">
    <property type="entry name" value="Isoase_HisA-like_bact"/>
</dbReference>
<dbReference type="InterPro" id="IPR011060">
    <property type="entry name" value="RibuloseP-bd_barrel"/>
</dbReference>
<dbReference type="NCBIfam" id="TIGR00007">
    <property type="entry name" value="1-(5-phosphoribosyl)-5-[(5-phosphoribosylamino)methylideneamino]imidazole-4-carboxamide isomerase"/>
    <property type="match status" value="1"/>
</dbReference>
<dbReference type="PANTHER" id="PTHR43090">
    <property type="entry name" value="1-(5-PHOSPHORIBOSYL)-5-[(5-PHOSPHORIBOSYLAMINO)METHYLIDENEAMINO] IMIDAZOLE-4-CARBOXAMIDE ISOMERASE"/>
    <property type="match status" value="1"/>
</dbReference>
<dbReference type="PANTHER" id="PTHR43090:SF2">
    <property type="entry name" value="1-(5-PHOSPHORIBOSYL)-5-[(5-PHOSPHORIBOSYLAMINO)METHYLIDENEAMINO] IMIDAZOLE-4-CARBOXAMIDE ISOMERASE"/>
    <property type="match status" value="1"/>
</dbReference>
<dbReference type="Pfam" id="PF00977">
    <property type="entry name" value="His_biosynth"/>
    <property type="match status" value="1"/>
</dbReference>
<dbReference type="SUPFAM" id="SSF51366">
    <property type="entry name" value="Ribulose-phoshate binding barrel"/>
    <property type="match status" value="1"/>
</dbReference>
<accession>A5UY50</accession>
<gene>
    <name evidence="1" type="primary">hisA</name>
    <name type="ordered locus">RoseRS_3192</name>
</gene>
<organism>
    <name type="scientific">Roseiflexus sp. (strain RS-1)</name>
    <dbReference type="NCBI Taxonomy" id="357808"/>
    <lineage>
        <taxon>Bacteria</taxon>
        <taxon>Bacillati</taxon>
        <taxon>Chloroflexota</taxon>
        <taxon>Chloroflexia</taxon>
        <taxon>Chloroflexales</taxon>
        <taxon>Roseiflexineae</taxon>
        <taxon>Roseiflexaceae</taxon>
        <taxon>Roseiflexus</taxon>
    </lineage>
</organism>
<keyword id="KW-0028">Amino-acid biosynthesis</keyword>
<keyword id="KW-0963">Cytoplasm</keyword>
<keyword id="KW-0368">Histidine biosynthesis</keyword>
<keyword id="KW-0413">Isomerase</keyword>
<evidence type="ECO:0000255" key="1">
    <source>
        <dbReference type="HAMAP-Rule" id="MF_01014"/>
    </source>
</evidence>
<proteinExistence type="inferred from homology"/>
<comment type="catalytic activity">
    <reaction evidence="1">
        <text>1-(5-phospho-beta-D-ribosyl)-5-[(5-phospho-beta-D-ribosylamino)methylideneamino]imidazole-4-carboxamide = 5-[(5-phospho-1-deoxy-D-ribulos-1-ylimino)methylamino]-1-(5-phospho-beta-D-ribosyl)imidazole-4-carboxamide</text>
        <dbReference type="Rhea" id="RHEA:15469"/>
        <dbReference type="ChEBI" id="CHEBI:58435"/>
        <dbReference type="ChEBI" id="CHEBI:58525"/>
        <dbReference type="EC" id="5.3.1.16"/>
    </reaction>
</comment>
<comment type="pathway">
    <text evidence="1">Amino-acid biosynthesis; L-histidine biosynthesis; L-histidine from 5-phospho-alpha-D-ribose 1-diphosphate: step 4/9.</text>
</comment>
<comment type="subcellular location">
    <subcellularLocation>
        <location evidence="1">Cytoplasm</location>
    </subcellularLocation>
</comment>
<comment type="similarity">
    <text evidence="1">Belongs to the HisA/HisF family.</text>
</comment>